<reference key="1">
    <citation type="journal article" date="2008" name="DNA Res.">
        <title>Complete genome sequence of Finegoldia magna, an anaerobic opportunistic pathogen.</title>
        <authorList>
            <person name="Goto T."/>
            <person name="Yamashita A."/>
            <person name="Hirakawa H."/>
            <person name="Matsutani M."/>
            <person name="Todo K."/>
            <person name="Ohshima K."/>
            <person name="Toh H."/>
            <person name="Miyamoto K."/>
            <person name="Kuhara S."/>
            <person name="Hattori M."/>
            <person name="Shimizu T."/>
            <person name="Akimoto S."/>
        </authorList>
    </citation>
    <scope>NUCLEOTIDE SEQUENCE [LARGE SCALE GENOMIC DNA]</scope>
    <source>
        <strain>ATCC 29328 / DSM 20472 / WAL 2508</strain>
    </source>
</reference>
<evidence type="ECO:0000255" key="1">
    <source>
        <dbReference type="HAMAP-Rule" id="MF_00303"/>
    </source>
</evidence>
<keyword id="KW-0131">Cell cycle</keyword>
<keyword id="KW-0132">Cell division</keyword>
<keyword id="KW-0143">Chaperone</keyword>
<keyword id="KW-0963">Cytoplasm</keyword>
<keyword id="KW-0413">Isomerase</keyword>
<keyword id="KW-1185">Reference proteome</keyword>
<keyword id="KW-0697">Rotamase</keyword>
<proteinExistence type="inferred from homology"/>
<accession>B0S2N7</accession>
<name>TIG_FINM2</name>
<dbReference type="EC" id="5.2.1.8" evidence="1"/>
<dbReference type="EMBL" id="AP008971">
    <property type="protein sequence ID" value="BAG08627.1"/>
    <property type="molecule type" value="Genomic_DNA"/>
</dbReference>
<dbReference type="RefSeq" id="WP_002842423.1">
    <property type="nucleotide sequence ID" value="NC_010376.1"/>
</dbReference>
<dbReference type="SMR" id="B0S2N7"/>
<dbReference type="STRING" id="334413.FMG_1209"/>
<dbReference type="KEGG" id="fma:FMG_1209"/>
<dbReference type="eggNOG" id="COG0544">
    <property type="taxonomic scope" value="Bacteria"/>
</dbReference>
<dbReference type="HOGENOM" id="CLU_033058_3_2_9"/>
<dbReference type="Proteomes" id="UP000001319">
    <property type="component" value="Chromosome"/>
</dbReference>
<dbReference type="GO" id="GO:0005737">
    <property type="term" value="C:cytoplasm"/>
    <property type="evidence" value="ECO:0007669"/>
    <property type="project" value="UniProtKB-SubCell"/>
</dbReference>
<dbReference type="GO" id="GO:0003755">
    <property type="term" value="F:peptidyl-prolyl cis-trans isomerase activity"/>
    <property type="evidence" value="ECO:0007669"/>
    <property type="project" value="UniProtKB-UniRule"/>
</dbReference>
<dbReference type="GO" id="GO:0051301">
    <property type="term" value="P:cell division"/>
    <property type="evidence" value="ECO:0007669"/>
    <property type="project" value="UniProtKB-KW"/>
</dbReference>
<dbReference type="GO" id="GO:0006457">
    <property type="term" value="P:protein folding"/>
    <property type="evidence" value="ECO:0007669"/>
    <property type="project" value="UniProtKB-UniRule"/>
</dbReference>
<dbReference type="GO" id="GO:0015031">
    <property type="term" value="P:protein transport"/>
    <property type="evidence" value="ECO:0007669"/>
    <property type="project" value="UniProtKB-UniRule"/>
</dbReference>
<dbReference type="FunFam" id="3.10.50.40:FF:000001">
    <property type="entry name" value="Trigger factor"/>
    <property type="match status" value="1"/>
</dbReference>
<dbReference type="Gene3D" id="3.10.50.40">
    <property type="match status" value="1"/>
</dbReference>
<dbReference type="Gene3D" id="3.30.70.1050">
    <property type="entry name" value="Trigger factor ribosome-binding domain"/>
    <property type="match status" value="1"/>
</dbReference>
<dbReference type="Gene3D" id="1.10.3120.10">
    <property type="entry name" value="Trigger factor, C-terminal domain"/>
    <property type="match status" value="1"/>
</dbReference>
<dbReference type="HAMAP" id="MF_00303">
    <property type="entry name" value="Trigger_factor_Tig"/>
    <property type="match status" value="1"/>
</dbReference>
<dbReference type="InterPro" id="IPR046357">
    <property type="entry name" value="PPIase_dom_sf"/>
</dbReference>
<dbReference type="InterPro" id="IPR001179">
    <property type="entry name" value="PPIase_FKBP_dom"/>
</dbReference>
<dbReference type="InterPro" id="IPR005215">
    <property type="entry name" value="Trig_fac"/>
</dbReference>
<dbReference type="InterPro" id="IPR008880">
    <property type="entry name" value="Trigger_fac_C"/>
</dbReference>
<dbReference type="InterPro" id="IPR037041">
    <property type="entry name" value="Trigger_fac_C_sf"/>
</dbReference>
<dbReference type="InterPro" id="IPR008881">
    <property type="entry name" value="Trigger_fac_ribosome-bd_bac"/>
</dbReference>
<dbReference type="InterPro" id="IPR036611">
    <property type="entry name" value="Trigger_fac_ribosome-bd_sf"/>
</dbReference>
<dbReference type="InterPro" id="IPR027304">
    <property type="entry name" value="Trigger_fact/SurA_dom_sf"/>
</dbReference>
<dbReference type="NCBIfam" id="TIGR00115">
    <property type="entry name" value="tig"/>
    <property type="match status" value="1"/>
</dbReference>
<dbReference type="Pfam" id="PF00254">
    <property type="entry name" value="FKBP_C"/>
    <property type="match status" value="1"/>
</dbReference>
<dbReference type="Pfam" id="PF05698">
    <property type="entry name" value="Trigger_C"/>
    <property type="match status" value="1"/>
</dbReference>
<dbReference type="Pfam" id="PF05697">
    <property type="entry name" value="Trigger_N"/>
    <property type="match status" value="1"/>
</dbReference>
<dbReference type="PIRSF" id="PIRSF003095">
    <property type="entry name" value="Trigger_factor"/>
    <property type="match status" value="1"/>
</dbReference>
<dbReference type="SUPFAM" id="SSF54534">
    <property type="entry name" value="FKBP-like"/>
    <property type="match status" value="1"/>
</dbReference>
<dbReference type="SUPFAM" id="SSF109998">
    <property type="entry name" value="Triger factor/SurA peptide-binding domain-like"/>
    <property type="match status" value="1"/>
</dbReference>
<dbReference type="SUPFAM" id="SSF102735">
    <property type="entry name" value="Trigger factor ribosome-binding domain"/>
    <property type="match status" value="1"/>
</dbReference>
<dbReference type="PROSITE" id="PS50059">
    <property type="entry name" value="FKBP_PPIASE"/>
    <property type="match status" value="1"/>
</dbReference>
<protein>
    <recommendedName>
        <fullName evidence="1">Trigger factor</fullName>
        <shortName evidence="1">TF</shortName>
        <ecNumber evidence="1">5.2.1.8</ecNumber>
    </recommendedName>
    <alternativeName>
        <fullName evidence="1">PPIase</fullName>
    </alternativeName>
</protein>
<sequence length="440" mass="50867">MSAVLVSKENNQAVFTCEIPAEDFNNAIEESYKKNRSRFSLKGFRKGKVPRKMLERAYGEGLFYEDAVNLLLPGIYEKAIEELELEPVSQPDIDLDDITENNDVKVKFTVDLKPEFELGDYSKLSAEIEEFKVTDSDVDMKVNHELESNARVQEVEGREAKENDTVSINFKGFVDDKAFDGGEAEDYELVLGSHTFIPGFEEQIVGHNAGDEFDVNVKFPEDYHEDSLKGKDAKFECKINSIKEKVLPELDDEFVKDVSEFDTLDEYKKDIKEHLEKDNEQRQLVEKQNKAVEALIEATEISVPESMIDNEVNRQFQDFARRVQQMGLNTDQYFQITNTSEEDVKNELRANAELKVKGDLVLEKYIEKEAIESTDEELDEQLKEFAKVYGKDDEEKFIEEFKNSPNVEFLKEDIKRKKALEKLVENTKFEIKKAEEKEDK</sequence>
<feature type="chain" id="PRO_1000115535" description="Trigger factor">
    <location>
        <begin position="1"/>
        <end position="440"/>
    </location>
</feature>
<feature type="domain" description="PPIase FKBP-type" evidence="1">
    <location>
        <begin position="163"/>
        <end position="248"/>
    </location>
</feature>
<comment type="function">
    <text evidence="1">Involved in protein export. Acts as a chaperone by maintaining the newly synthesized protein in an open conformation. Functions as a peptidyl-prolyl cis-trans isomerase.</text>
</comment>
<comment type="catalytic activity">
    <reaction evidence="1">
        <text>[protein]-peptidylproline (omega=180) = [protein]-peptidylproline (omega=0)</text>
        <dbReference type="Rhea" id="RHEA:16237"/>
        <dbReference type="Rhea" id="RHEA-COMP:10747"/>
        <dbReference type="Rhea" id="RHEA-COMP:10748"/>
        <dbReference type="ChEBI" id="CHEBI:83833"/>
        <dbReference type="ChEBI" id="CHEBI:83834"/>
        <dbReference type="EC" id="5.2.1.8"/>
    </reaction>
</comment>
<comment type="subcellular location">
    <subcellularLocation>
        <location>Cytoplasm</location>
    </subcellularLocation>
    <text evidence="1">About half TF is bound to the ribosome near the polypeptide exit tunnel while the other half is free in the cytoplasm.</text>
</comment>
<comment type="domain">
    <text evidence="1">Consists of 3 domains; the N-terminus binds the ribosome, the middle domain has PPIase activity, while the C-terminus has intrinsic chaperone activity on its own.</text>
</comment>
<comment type="similarity">
    <text evidence="1">Belongs to the FKBP-type PPIase family. Tig subfamily.</text>
</comment>
<gene>
    <name evidence="1" type="primary">tig</name>
    <name type="ordered locus">FMG_1209</name>
</gene>
<organism>
    <name type="scientific">Finegoldia magna (strain ATCC 29328 / DSM 20472 / WAL 2508)</name>
    <name type="common">Peptostreptococcus magnus</name>
    <dbReference type="NCBI Taxonomy" id="334413"/>
    <lineage>
        <taxon>Bacteria</taxon>
        <taxon>Bacillati</taxon>
        <taxon>Bacillota</taxon>
        <taxon>Tissierellia</taxon>
        <taxon>Tissierellales</taxon>
        <taxon>Peptoniphilaceae</taxon>
        <taxon>Finegoldia</taxon>
    </lineage>
</organism>